<proteinExistence type="evidence at protein level"/>
<sequence length="256" mass="28909">MLSRVVLSAAATAAPSLKNAAFLGPGVLQATRTFHTGQPHLVPVPPLPEYGGKVRYGLIPEEFFQFLYPKTGVTGPYVLGTGLILYALSKEIYVISAETFTALSVLGVMVYGIKKYGPFVADFADKLNEQKLAQLEEAKQASIQHIQNAIDTEKSQQALVQKRHYLFDVQRNNIAMALEVTYRERLYRVYKEVKNRLDYHISVQNMMRRKEQEHMINWVEKHVVQSISTQQEKETIAKCIADLKLLAKKAQAQPVM</sequence>
<dbReference type="EMBL" id="X60221">
    <property type="protein sequence ID" value="CAA42782.1"/>
    <property type="molecule type" value="mRNA"/>
</dbReference>
<dbReference type="EMBL" id="AL390195">
    <property type="status" value="NOT_ANNOTATED_CDS"/>
    <property type="molecule type" value="Genomic_DNA"/>
</dbReference>
<dbReference type="EMBL" id="BC005366">
    <property type="protein sequence ID" value="AAH05366.1"/>
    <property type="molecule type" value="mRNA"/>
</dbReference>
<dbReference type="EMBL" id="BC005960">
    <property type="protein sequence ID" value="AAH05960.1"/>
    <property type="molecule type" value="mRNA"/>
</dbReference>
<dbReference type="EMBL" id="BC016350">
    <property type="protein sequence ID" value="AAH16350.1"/>
    <property type="molecule type" value="mRNA"/>
</dbReference>
<dbReference type="CCDS" id="CCDS836.1"/>
<dbReference type="PIR" id="JQ1144">
    <property type="entry name" value="JQ1144"/>
</dbReference>
<dbReference type="RefSeq" id="NP_001679.2">
    <property type="nucleotide sequence ID" value="NM_001688.4"/>
</dbReference>
<dbReference type="PDB" id="8H9F">
    <property type="method" value="EM"/>
    <property type="resolution" value="2.69 A"/>
    <property type="chains" value="K=43-256"/>
</dbReference>
<dbReference type="PDB" id="8H9G">
    <property type="method" value="EM"/>
    <property type="resolution" value="2.95 A"/>
    <property type="chains" value="K=43-256"/>
</dbReference>
<dbReference type="PDB" id="8H9J">
    <property type="method" value="EM"/>
    <property type="resolution" value="3.26 A"/>
    <property type="chains" value="K=43-256"/>
</dbReference>
<dbReference type="PDB" id="8H9K">
    <property type="method" value="EM"/>
    <property type="resolution" value="3.51 A"/>
    <property type="chains" value="K=43-256"/>
</dbReference>
<dbReference type="PDB" id="8H9M">
    <property type="method" value="EM"/>
    <property type="resolution" value="3.00 A"/>
    <property type="chains" value="K=43-256"/>
</dbReference>
<dbReference type="PDB" id="8H9N">
    <property type="method" value="EM"/>
    <property type="resolution" value="3.56 A"/>
    <property type="chains" value="K=43-256"/>
</dbReference>
<dbReference type="PDB" id="8H9Q">
    <property type="method" value="EM"/>
    <property type="resolution" value="3.47 A"/>
    <property type="chains" value="K=43-256"/>
</dbReference>
<dbReference type="PDB" id="8H9R">
    <property type="method" value="EM"/>
    <property type="resolution" value="3.97 A"/>
    <property type="chains" value="K=43-256"/>
</dbReference>
<dbReference type="PDB" id="8H9S">
    <property type="method" value="EM"/>
    <property type="resolution" value="2.53 A"/>
    <property type="chains" value="K=43-256"/>
</dbReference>
<dbReference type="PDB" id="8H9T">
    <property type="method" value="EM"/>
    <property type="resolution" value="2.77 A"/>
    <property type="chains" value="K=43-256"/>
</dbReference>
<dbReference type="PDB" id="8H9U">
    <property type="method" value="EM"/>
    <property type="resolution" value="2.61 A"/>
    <property type="chains" value="K=43-256"/>
</dbReference>
<dbReference type="PDB" id="8H9V">
    <property type="method" value="EM"/>
    <property type="resolution" value="3.02 A"/>
    <property type="chains" value="K=43-256"/>
</dbReference>
<dbReference type="PDB" id="8KHF">
    <property type="method" value="EM"/>
    <property type="resolution" value="3.13 A"/>
    <property type="chains" value="K=43-256"/>
</dbReference>
<dbReference type="PDB" id="8KI3">
    <property type="method" value="EM"/>
    <property type="resolution" value="2.89 A"/>
    <property type="chains" value="K=43-256"/>
</dbReference>
<dbReference type="PDBsum" id="8H9F"/>
<dbReference type="PDBsum" id="8H9G"/>
<dbReference type="PDBsum" id="8H9J"/>
<dbReference type="PDBsum" id="8H9K"/>
<dbReference type="PDBsum" id="8H9M"/>
<dbReference type="PDBsum" id="8H9N"/>
<dbReference type="PDBsum" id="8H9Q"/>
<dbReference type="PDBsum" id="8H9R"/>
<dbReference type="PDBsum" id="8H9S"/>
<dbReference type="PDBsum" id="8H9T"/>
<dbReference type="PDBsum" id="8H9U"/>
<dbReference type="PDBsum" id="8H9V"/>
<dbReference type="PDBsum" id="8KHF"/>
<dbReference type="PDBsum" id="8KI3"/>
<dbReference type="EMDB" id="EMD-34565"/>
<dbReference type="EMDB" id="EMD-34566"/>
<dbReference type="EMDB" id="EMD-34569"/>
<dbReference type="EMDB" id="EMD-34570"/>
<dbReference type="EMDB" id="EMD-34573"/>
<dbReference type="EMDB" id="EMD-34574"/>
<dbReference type="EMDB" id="EMD-34577"/>
<dbReference type="EMDB" id="EMD-34578"/>
<dbReference type="EMDB" id="EMD-34580"/>
<dbReference type="EMDB" id="EMD-34581"/>
<dbReference type="EMDB" id="EMD-34582"/>
<dbReference type="EMDB" id="EMD-34583"/>
<dbReference type="EMDB" id="EMD-37243"/>
<dbReference type="EMDB" id="EMD-37251"/>
<dbReference type="SMR" id="P24539"/>
<dbReference type="BioGRID" id="107000">
    <property type="interactions" value="371"/>
</dbReference>
<dbReference type="ComplexPortal" id="CPX-6151">
    <property type="entry name" value="Mitochondrial proton-transporting ATP synthase complex"/>
</dbReference>
<dbReference type="CORUM" id="P24539"/>
<dbReference type="FunCoup" id="P24539">
    <property type="interactions" value="2241"/>
</dbReference>
<dbReference type="IntAct" id="P24539">
    <property type="interactions" value="178"/>
</dbReference>
<dbReference type="MINT" id="P24539"/>
<dbReference type="STRING" id="9606.ENSP00000358737"/>
<dbReference type="TCDB" id="3.A.2.1.15">
    <property type="family name" value="the h+- or na+-translocating f-type, v-type and a-type atpase (f-atpase) superfamily"/>
</dbReference>
<dbReference type="GlyGen" id="P24539">
    <property type="glycosylation" value="1 site, 1 O-linked glycan (1 site)"/>
</dbReference>
<dbReference type="iPTMnet" id="P24539"/>
<dbReference type="MetOSite" id="P24539"/>
<dbReference type="PhosphoSitePlus" id="P24539"/>
<dbReference type="SwissPalm" id="P24539"/>
<dbReference type="BioMuta" id="ATP5F1"/>
<dbReference type="DMDM" id="20455474"/>
<dbReference type="jPOST" id="P24539"/>
<dbReference type="MassIVE" id="P24539"/>
<dbReference type="PaxDb" id="9606-ENSP00000358737"/>
<dbReference type="PeptideAtlas" id="P24539"/>
<dbReference type="ProteomicsDB" id="54215"/>
<dbReference type="Pumba" id="P24539"/>
<dbReference type="TopDownProteomics" id="P24539"/>
<dbReference type="Antibodypedia" id="33810">
    <property type="antibodies" value="191 antibodies from 32 providers"/>
</dbReference>
<dbReference type="DNASU" id="515"/>
<dbReference type="Ensembl" id="ENST00000369722.8">
    <property type="protein sequence ID" value="ENSP00000358737.3"/>
    <property type="gene ID" value="ENSG00000116459.11"/>
</dbReference>
<dbReference type="GeneID" id="515"/>
<dbReference type="KEGG" id="hsa:515"/>
<dbReference type="MANE-Select" id="ENST00000369722.8">
    <property type="protein sequence ID" value="ENSP00000358737.3"/>
    <property type="RefSeq nucleotide sequence ID" value="NM_001688.5"/>
    <property type="RefSeq protein sequence ID" value="NP_001679.2"/>
</dbReference>
<dbReference type="AGR" id="HGNC:840"/>
<dbReference type="CTD" id="515"/>
<dbReference type="DisGeNET" id="515"/>
<dbReference type="GeneCards" id="ATP5PB"/>
<dbReference type="HGNC" id="HGNC:840">
    <property type="gene designation" value="ATP5PB"/>
</dbReference>
<dbReference type="HPA" id="ENSG00000116459">
    <property type="expression patterns" value="Tissue enhanced (skeletal muscle, tongue)"/>
</dbReference>
<dbReference type="MalaCards" id="ATP5PB"/>
<dbReference type="MIM" id="603270">
    <property type="type" value="gene"/>
</dbReference>
<dbReference type="neXtProt" id="NX_P24539"/>
<dbReference type="OpenTargets" id="ENSG00000116459"/>
<dbReference type="PharmGKB" id="PA25130"/>
<dbReference type="VEuPathDB" id="HostDB:ENSG00000116459"/>
<dbReference type="eggNOG" id="KOG3976">
    <property type="taxonomic scope" value="Eukaryota"/>
</dbReference>
<dbReference type="GeneTree" id="ENSGT00390000001958"/>
<dbReference type="HOGENOM" id="CLU_087186_1_0_1"/>
<dbReference type="InParanoid" id="P24539"/>
<dbReference type="OMA" id="PEEWFTF"/>
<dbReference type="OrthoDB" id="67388at2759"/>
<dbReference type="PAN-GO" id="P24539">
    <property type="GO annotations" value="2 GO annotations based on evolutionary models"/>
</dbReference>
<dbReference type="PhylomeDB" id="P24539"/>
<dbReference type="TreeFam" id="TF313250"/>
<dbReference type="BioCyc" id="MetaCyc:HS04013-MONOMER"/>
<dbReference type="PathwayCommons" id="P24539"/>
<dbReference type="Reactome" id="R-HSA-163210">
    <property type="pathway name" value="Formation of ATP by chemiosmotic coupling"/>
</dbReference>
<dbReference type="Reactome" id="R-HSA-8949613">
    <property type="pathway name" value="Cristae formation"/>
</dbReference>
<dbReference type="SignaLink" id="P24539"/>
<dbReference type="SIGNOR" id="P24539"/>
<dbReference type="BioGRID-ORCS" id="515">
    <property type="hits" value="443 hits in 1166 CRISPR screens"/>
</dbReference>
<dbReference type="CD-CODE" id="FB4E32DD">
    <property type="entry name" value="Presynaptic clusters and postsynaptic densities"/>
</dbReference>
<dbReference type="ChiTaRS" id="ATP5F1">
    <property type="organism name" value="human"/>
</dbReference>
<dbReference type="GeneWiki" id="ATP5F1"/>
<dbReference type="GenomeRNAi" id="515"/>
<dbReference type="Pharos" id="P24539">
    <property type="development level" value="Tbio"/>
</dbReference>
<dbReference type="PRO" id="PR:P24539"/>
<dbReference type="Proteomes" id="UP000005640">
    <property type="component" value="Chromosome 1"/>
</dbReference>
<dbReference type="RNAct" id="P24539">
    <property type="molecule type" value="protein"/>
</dbReference>
<dbReference type="Bgee" id="ENSG00000116459">
    <property type="expression patterns" value="Expressed in heart right ventricle and 204 other cell types or tissues"/>
</dbReference>
<dbReference type="ExpressionAtlas" id="P24539">
    <property type="expression patterns" value="baseline and differential"/>
</dbReference>
<dbReference type="GO" id="GO:0016020">
    <property type="term" value="C:membrane"/>
    <property type="evidence" value="ECO:0007005"/>
    <property type="project" value="UniProtKB"/>
</dbReference>
<dbReference type="GO" id="GO:0005743">
    <property type="term" value="C:mitochondrial inner membrane"/>
    <property type="evidence" value="ECO:0000304"/>
    <property type="project" value="Reactome"/>
</dbReference>
<dbReference type="GO" id="GO:0005759">
    <property type="term" value="C:mitochondrial matrix"/>
    <property type="evidence" value="ECO:0000303"/>
    <property type="project" value="UniProtKB"/>
</dbReference>
<dbReference type="GO" id="GO:0005739">
    <property type="term" value="C:mitochondrion"/>
    <property type="evidence" value="ECO:0000314"/>
    <property type="project" value="HPA"/>
</dbReference>
<dbReference type="GO" id="GO:0005634">
    <property type="term" value="C:nucleus"/>
    <property type="evidence" value="ECO:0007005"/>
    <property type="project" value="UniProtKB"/>
</dbReference>
<dbReference type="GO" id="GO:0045259">
    <property type="term" value="C:proton-transporting ATP synthase complex"/>
    <property type="evidence" value="ECO:0000314"/>
    <property type="project" value="UniProtKB"/>
</dbReference>
<dbReference type="GO" id="GO:0015078">
    <property type="term" value="F:proton transmembrane transporter activity"/>
    <property type="evidence" value="ECO:0007669"/>
    <property type="project" value="InterPro"/>
</dbReference>
<dbReference type="GO" id="GO:0015986">
    <property type="term" value="P:proton motive force-driven ATP synthesis"/>
    <property type="evidence" value="ECO:0000318"/>
    <property type="project" value="GO_Central"/>
</dbReference>
<dbReference type="GO" id="GO:0042776">
    <property type="term" value="P:proton motive force-driven mitochondrial ATP synthesis"/>
    <property type="evidence" value="ECO:0000314"/>
    <property type="project" value="UniProtKB"/>
</dbReference>
<dbReference type="GO" id="GO:0021762">
    <property type="term" value="P:substantia nigra development"/>
    <property type="evidence" value="ECO:0007007"/>
    <property type="project" value="UniProtKB"/>
</dbReference>
<dbReference type="FunFam" id="1.20.5.2210:FF:000001">
    <property type="entry name" value="ATP synthase F(0) complex subunit B1, mitochondrial"/>
    <property type="match status" value="1"/>
</dbReference>
<dbReference type="Gene3D" id="1.20.5.2210">
    <property type="match status" value="1"/>
</dbReference>
<dbReference type="InterPro" id="IPR008688">
    <property type="entry name" value="ATP_synth_Bsub_B/MI25"/>
</dbReference>
<dbReference type="InterPro" id="IPR013837">
    <property type="entry name" value="ATP_synth_F0_suB"/>
</dbReference>
<dbReference type="PANTHER" id="PTHR12733:SF3">
    <property type="entry name" value="ATP SYNTHASE F(0) COMPLEX SUBUNIT B1, MITOCHONDRIAL"/>
    <property type="match status" value="1"/>
</dbReference>
<dbReference type="PANTHER" id="PTHR12733">
    <property type="entry name" value="MITOCHONDRIAL ATP SYNTHASE B CHAIN"/>
    <property type="match status" value="1"/>
</dbReference>
<dbReference type="Pfam" id="PF05405">
    <property type="entry name" value="Mt_ATP-synt_B"/>
    <property type="match status" value="1"/>
</dbReference>
<dbReference type="SUPFAM" id="SSF161060">
    <property type="entry name" value="ATP synthase B chain-like"/>
    <property type="match status" value="1"/>
</dbReference>
<name>AT5F1_HUMAN</name>
<protein>
    <recommendedName>
        <fullName evidence="5">ATP synthase peripheral stalk subunit b, mitochondrial</fullName>
    </recommendedName>
    <alternativeName>
        <fullName evidence="5">ATP synthase F(0) complex subunit B1, mitochondrial</fullName>
    </alternativeName>
    <alternativeName>
        <fullName evidence="5">ATP synthase peripheral stalk-membrane subunit b</fullName>
    </alternativeName>
    <alternativeName>
        <fullName>ATP synthase proton-transporting mitochondrial F(0) complex subunit B1</fullName>
    </alternativeName>
    <alternativeName>
        <fullName>ATP synthase subunit b</fullName>
        <shortName>ATPase subunit b</shortName>
    </alternativeName>
</protein>
<keyword id="KW-0002">3D-structure</keyword>
<keyword id="KW-0007">Acetylation</keyword>
<keyword id="KW-0138">CF(0)</keyword>
<keyword id="KW-0375">Hydrogen ion transport</keyword>
<keyword id="KW-0406">Ion transport</keyword>
<keyword id="KW-0472">Membrane</keyword>
<keyword id="KW-0496">Mitochondrion</keyword>
<keyword id="KW-0999">Mitochondrion inner membrane</keyword>
<keyword id="KW-1267">Proteomics identification</keyword>
<keyword id="KW-1185">Reference proteome</keyword>
<keyword id="KW-0809">Transit peptide</keyword>
<keyword id="KW-0813">Transport</keyword>
<evidence type="ECO:0000250" key="1">
    <source>
        <dbReference type="UniProtKB" id="P13619"/>
    </source>
</evidence>
<evidence type="ECO:0000250" key="2">
    <source>
        <dbReference type="UniProtKB" id="P19483"/>
    </source>
</evidence>
<evidence type="ECO:0000250" key="3">
    <source>
        <dbReference type="UniProtKB" id="Q9CQQ7"/>
    </source>
</evidence>
<evidence type="ECO:0000269" key="4">
    <source>
    </source>
</evidence>
<evidence type="ECO:0000305" key="5"/>
<evidence type="ECO:0000305" key="6">
    <source>
    </source>
</evidence>
<evidence type="ECO:0000312" key="7">
    <source>
        <dbReference type="HGNC" id="HGNC:840"/>
    </source>
</evidence>
<evidence type="ECO:0007744" key="8">
    <source>
        <dbReference type="PDB" id="8H9F"/>
    </source>
</evidence>
<evidence type="ECO:0007744" key="9">
    <source>
        <dbReference type="PDB" id="8H9G"/>
    </source>
</evidence>
<evidence type="ECO:0007744" key="10">
    <source>
        <dbReference type="PDB" id="8H9J"/>
    </source>
</evidence>
<evidence type="ECO:0007744" key="11">
    <source>
        <dbReference type="PDB" id="8H9K"/>
    </source>
</evidence>
<evidence type="ECO:0007744" key="12">
    <source>
        <dbReference type="PDB" id="8H9M"/>
    </source>
</evidence>
<evidence type="ECO:0007744" key="13">
    <source>
        <dbReference type="PDB" id="8H9N"/>
    </source>
</evidence>
<evidence type="ECO:0007744" key="14">
    <source>
        <dbReference type="PDB" id="8H9Q"/>
    </source>
</evidence>
<evidence type="ECO:0007744" key="15">
    <source>
        <dbReference type="PDB" id="8H9R"/>
    </source>
</evidence>
<evidence type="ECO:0007744" key="16">
    <source>
        <dbReference type="PDB" id="8H9S"/>
    </source>
</evidence>
<evidence type="ECO:0007744" key="17">
    <source>
    </source>
</evidence>
<evidence type="ECO:0007744" key="18">
    <source>
    </source>
</evidence>
<evidence type="ECO:0007829" key="19">
    <source>
        <dbReference type="PDB" id="8H9G"/>
    </source>
</evidence>
<feature type="transit peptide" description="Mitochondrion" evidence="18">
    <location>
        <begin position="1"/>
        <end position="42"/>
    </location>
</feature>
<feature type="chain" id="PRO_0000002513" description="ATP synthase peripheral stalk subunit b, mitochondrial">
    <location>
        <begin position="43"/>
        <end position="256"/>
    </location>
</feature>
<feature type="modified residue" description="N6-succinyllysine" evidence="3">
    <location>
        <position position="131"/>
    </location>
</feature>
<feature type="modified residue" description="N6-acetyllysine" evidence="3">
    <location>
        <position position="139"/>
    </location>
</feature>
<feature type="modified residue" description="N6-acetyllysine" evidence="3">
    <location>
        <position position="154"/>
    </location>
</feature>
<feature type="modified residue" description="N6-acetyllysine" evidence="3">
    <location>
        <position position="162"/>
    </location>
</feature>
<feature type="modified residue" description="N6-acetyllysine" evidence="17">
    <location>
        <position position="221"/>
    </location>
</feature>
<feature type="modified residue" description="N6-acetyllysine" evidence="17">
    <location>
        <position position="233"/>
    </location>
</feature>
<feature type="modified residue" description="N6-acetyllysine" evidence="3">
    <location>
        <position position="244"/>
    </location>
</feature>
<feature type="sequence variant" id="VAR_033534" description="In dbSNP:rs1264895.">
    <original>T</original>
    <variation>M</variation>
    <location>
        <position position="152"/>
    </location>
</feature>
<feature type="sequence variant" id="VAR_013176" description="In dbSNP:rs1264895.">
    <original>T</original>
    <variation>N</variation>
    <location>
        <position position="152"/>
    </location>
</feature>
<feature type="sequence conflict" description="In Ref. 1; CAA42782." evidence="5" ref="1">
    <original>I</original>
    <variation>V</variation>
    <location>
        <position position="84"/>
    </location>
</feature>
<feature type="sequence conflict" description="In Ref. 3; AAH05960." evidence="5" ref="3">
    <original>E</original>
    <variation>G</variation>
    <location>
        <position position="91"/>
    </location>
</feature>
<feature type="sequence conflict" description="In Ref. 3; AAH05960." evidence="5" ref="3">
    <original>K</original>
    <variation>R</variation>
    <location>
        <position position="194"/>
    </location>
</feature>
<feature type="turn" evidence="19">
    <location>
        <begin position="56"/>
        <end position="58"/>
    </location>
</feature>
<feature type="helix" evidence="19">
    <location>
        <begin position="61"/>
        <end position="71"/>
    </location>
</feature>
<feature type="turn" evidence="19">
    <location>
        <begin position="72"/>
        <end position="74"/>
    </location>
</feature>
<feature type="helix" evidence="19">
    <location>
        <begin position="75"/>
        <end position="89"/>
    </location>
</feature>
<feature type="helix" evidence="19">
    <location>
        <begin position="97"/>
        <end position="162"/>
    </location>
</feature>
<feature type="helix" evidence="19">
    <location>
        <begin position="165"/>
        <end position="223"/>
    </location>
</feature>
<feature type="helix" evidence="19">
    <location>
        <begin position="236"/>
        <end position="247"/>
    </location>
</feature>
<organism>
    <name type="scientific">Homo sapiens</name>
    <name type="common">Human</name>
    <dbReference type="NCBI Taxonomy" id="9606"/>
    <lineage>
        <taxon>Eukaryota</taxon>
        <taxon>Metazoa</taxon>
        <taxon>Chordata</taxon>
        <taxon>Craniata</taxon>
        <taxon>Vertebrata</taxon>
        <taxon>Euteleostomi</taxon>
        <taxon>Mammalia</taxon>
        <taxon>Eutheria</taxon>
        <taxon>Euarchontoglires</taxon>
        <taxon>Primates</taxon>
        <taxon>Haplorrhini</taxon>
        <taxon>Catarrhini</taxon>
        <taxon>Hominidae</taxon>
        <taxon>Homo</taxon>
    </lineage>
</organism>
<gene>
    <name evidence="7" type="primary">ATP5PB</name>
    <name type="synonym">ATP5F1</name>
</gene>
<accession>P24539</accession>
<accession>Q9BQ68</accession>
<accession>Q9BRU8</accession>
<comment type="function">
    <text evidence="1 2 4 6">Subunit b, of the mitochondrial membrane ATP synthase complex (F(1)F(0) ATP synthase or Complex V) that produces ATP from ADP in the presence of a proton gradient across the membrane which is generated by electron transport complexes of the respiratory chain (PubMed:37244256). ATP synthase complex consist of a soluble F(1) head domain - the catalytic core - and a membrane F(1) domain - the membrane proton channel (PubMed:37244256). These two domains are linked by a central stalk rotating inside the F(1) region and a stationary peripheral stalk (PubMed:37244256). During catalysis, ATP synthesis in the catalytic domain of F(1) is coupled via a rotary mechanism of the central stalk subunits to proton translocation (Probable). In vivo, can only synthesize ATP although its ATP hydrolase activity can be activated artificially in vitro (By similarity). Part of the complex F(0) domain (PubMed:37244256). Part of the complex F(0) domain and the peripheric stalk, which acts as a stator to hold the catalytic alpha(3)beta(3) subcomplex and subunit a/ATP6 static relative to the rotary elements (By similarity).</text>
</comment>
<comment type="subunit">
    <text evidence="4">Component of the ATP synthase complex composed at least of ATP5F1A/subunit alpha, ATP5F1B/subunit beta, ATP5MC1/subunit c (homooctomer), MT-ATP6/subunit a, MT-ATP8/subunit 8, ATP5ME/subunit e, ATP5MF/subunit f, ATP5MG/subunit g, ATP5MK/subunit k, ATP5MJ/subunit j, ATP5F1C/subunit gamma, ATP5F1D/subunit delta, ATP5F1E/subunit epsilon, ATP5PF/subunit F6, ATP5PB/subunit b, ATP5PD/subunit d, ATP5PO/subunit OSCP (PubMed:37244256). ATP synthase complex consists of a soluble F(1) head domain (subunits alpha(3) and beta(3)) - the catalytic core - and a membrane F(0) domain - the membrane proton channel (subunits c, a, 8, e, f, g, k and j) (PubMed:37244256). These two domains are linked by a central stalk (subunits gamma, delta, and epsilon) rotating inside the F1 region and a stationary peripheral stalk (subunits F6, b, d, and OSCP) (PubMed:37244256).</text>
</comment>
<comment type="interaction">
    <interactant intactId="EBI-1044810">
        <id>P24539</id>
    </interactant>
    <interactant intactId="EBI-351437">
        <id>P25705</id>
        <label>ATP5F1A</label>
    </interactant>
    <organismsDiffer>false</organismsDiffer>
    <experiments>10</experiments>
</comment>
<comment type="interaction">
    <interactant intactId="EBI-1044810">
        <id>P24539</id>
    </interactant>
    <interactant intactId="EBI-724024">
        <id>O75947</id>
        <label>ATP5PD</label>
    </interactant>
    <organismsDiffer>false</organismsDiffer>
    <experiments>5</experiments>
</comment>
<comment type="interaction">
    <interactant intactId="EBI-1044810">
        <id>P24539</id>
    </interactant>
    <interactant intactId="EBI-930964">
        <id>P54253</id>
        <label>ATXN1</label>
    </interactant>
    <organismsDiffer>false</organismsDiffer>
    <experiments>3</experiments>
</comment>
<comment type="interaction">
    <interactant intactId="EBI-1044810">
        <id>P24539</id>
    </interactant>
    <interactant intactId="EBI-2805660">
        <id>Q14154</id>
        <label>DELE1</label>
    </interactant>
    <organismsDiffer>false</organismsDiffer>
    <experiments>3</experiments>
</comment>
<comment type="interaction">
    <interactant intactId="EBI-1044810">
        <id>P24539</id>
    </interactant>
    <interactant intactId="EBI-1001144">
        <id>Q9H410</id>
        <label>DSN1</label>
    </interactant>
    <organismsDiffer>false</organismsDiffer>
    <experiments>3</experiments>
</comment>
<comment type="interaction">
    <interactant intactId="EBI-1044810">
        <id>P24539</id>
    </interactant>
    <interactant intactId="EBI-3893327">
        <id>Q6P1L5</id>
        <label>FAM117B</label>
    </interactant>
    <organismsDiffer>false</organismsDiffer>
    <experiments>3</experiments>
</comment>
<comment type="interaction">
    <interactant intactId="EBI-1044810">
        <id>P24539</id>
    </interactant>
    <interactant intactId="EBI-466029">
        <id>P42858</id>
        <label>HTT</label>
    </interactant>
    <organismsDiffer>false</organismsDiffer>
    <experiments>3</experiments>
</comment>
<comment type="interaction">
    <interactant intactId="EBI-1044810">
        <id>P24539</id>
    </interactant>
    <interactant intactId="EBI-8487781">
        <id>Q8N6F8</id>
        <label>METTL27</label>
    </interactant>
    <organismsDiffer>false</organismsDiffer>
    <experiments>3</experiments>
</comment>
<comment type="interaction">
    <interactant intactId="EBI-1044810">
        <id>P24539</id>
    </interactant>
    <interactant intactId="EBI-10488185">
        <id>Q9ULW8</id>
        <label>PADI3</label>
    </interactant>
    <organismsDiffer>false</organismsDiffer>
    <experiments>3</experiments>
</comment>
<comment type="subcellular location">
    <subcellularLocation>
        <location>Mitochondrion</location>
    </subcellularLocation>
    <subcellularLocation>
        <location>Mitochondrion inner membrane</location>
    </subcellularLocation>
</comment>
<comment type="similarity">
    <text evidence="5">Belongs to the eukaryotic ATPase B chain family.</text>
</comment>
<reference key="1">
    <citation type="journal article" date="1991" name="Biochem. Biophys. Res. Commun.">
        <title>Molecular cloning of cDNA for the import precursor of human subunit B of H(+)-ATP synthase in mitochondria.</title>
        <authorList>
            <person name="Higuti T."/>
            <person name="Tsurumi C."/>
            <person name="Osaka F."/>
            <person name="Kawamura Y."/>
            <person name="Tsujita H."/>
            <person name="Yoshihara Y."/>
            <person name="Tani I."/>
            <person name="Tanaka K."/>
            <person name="Ichirara A."/>
        </authorList>
    </citation>
    <scope>NUCLEOTIDE SEQUENCE [MRNA]</scope>
</reference>
<reference key="2">
    <citation type="journal article" date="2006" name="Nature">
        <title>The DNA sequence and biological annotation of human chromosome 1.</title>
        <authorList>
            <person name="Gregory S.G."/>
            <person name="Barlow K.F."/>
            <person name="McLay K.E."/>
            <person name="Kaul R."/>
            <person name="Swarbreck D."/>
            <person name="Dunham A."/>
            <person name="Scott C.E."/>
            <person name="Howe K.L."/>
            <person name="Woodfine K."/>
            <person name="Spencer C.C.A."/>
            <person name="Jones M.C."/>
            <person name="Gillson C."/>
            <person name="Searle S."/>
            <person name="Zhou Y."/>
            <person name="Kokocinski F."/>
            <person name="McDonald L."/>
            <person name="Evans R."/>
            <person name="Phillips K."/>
            <person name="Atkinson A."/>
            <person name="Cooper R."/>
            <person name="Jones C."/>
            <person name="Hall R.E."/>
            <person name="Andrews T.D."/>
            <person name="Lloyd C."/>
            <person name="Ainscough R."/>
            <person name="Almeida J.P."/>
            <person name="Ambrose K.D."/>
            <person name="Anderson F."/>
            <person name="Andrew R.W."/>
            <person name="Ashwell R.I.S."/>
            <person name="Aubin K."/>
            <person name="Babbage A.K."/>
            <person name="Bagguley C.L."/>
            <person name="Bailey J."/>
            <person name="Beasley H."/>
            <person name="Bethel G."/>
            <person name="Bird C.P."/>
            <person name="Bray-Allen S."/>
            <person name="Brown J.Y."/>
            <person name="Brown A.J."/>
            <person name="Buckley D."/>
            <person name="Burton J."/>
            <person name="Bye J."/>
            <person name="Carder C."/>
            <person name="Chapman J.C."/>
            <person name="Clark S.Y."/>
            <person name="Clarke G."/>
            <person name="Clee C."/>
            <person name="Cobley V."/>
            <person name="Collier R.E."/>
            <person name="Corby N."/>
            <person name="Coville G.J."/>
            <person name="Davies J."/>
            <person name="Deadman R."/>
            <person name="Dunn M."/>
            <person name="Earthrowl M."/>
            <person name="Ellington A.G."/>
            <person name="Errington H."/>
            <person name="Frankish A."/>
            <person name="Frankland J."/>
            <person name="French L."/>
            <person name="Garner P."/>
            <person name="Garnett J."/>
            <person name="Gay L."/>
            <person name="Ghori M.R.J."/>
            <person name="Gibson R."/>
            <person name="Gilby L.M."/>
            <person name="Gillett W."/>
            <person name="Glithero R.J."/>
            <person name="Grafham D.V."/>
            <person name="Griffiths C."/>
            <person name="Griffiths-Jones S."/>
            <person name="Grocock R."/>
            <person name="Hammond S."/>
            <person name="Harrison E.S.I."/>
            <person name="Hart E."/>
            <person name="Haugen E."/>
            <person name="Heath P.D."/>
            <person name="Holmes S."/>
            <person name="Holt K."/>
            <person name="Howden P.J."/>
            <person name="Hunt A.R."/>
            <person name="Hunt S.E."/>
            <person name="Hunter G."/>
            <person name="Isherwood J."/>
            <person name="James R."/>
            <person name="Johnson C."/>
            <person name="Johnson D."/>
            <person name="Joy A."/>
            <person name="Kay M."/>
            <person name="Kershaw J.K."/>
            <person name="Kibukawa M."/>
            <person name="Kimberley A.M."/>
            <person name="King A."/>
            <person name="Knights A.J."/>
            <person name="Lad H."/>
            <person name="Laird G."/>
            <person name="Lawlor S."/>
            <person name="Leongamornlert D.A."/>
            <person name="Lloyd D.M."/>
            <person name="Loveland J."/>
            <person name="Lovell J."/>
            <person name="Lush M.J."/>
            <person name="Lyne R."/>
            <person name="Martin S."/>
            <person name="Mashreghi-Mohammadi M."/>
            <person name="Matthews L."/>
            <person name="Matthews N.S.W."/>
            <person name="McLaren S."/>
            <person name="Milne S."/>
            <person name="Mistry S."/>
            <person name="Moore M.J.F."/>
            <person name="Nickerson T."/>
            <person name="O'Dell C.N."/>
            <person name="Oliver K."/>
            <person name="Palmeiri A."/>
            <person name="Palmer S.A."/>
            <person name="Parker A."/>
            <person name="Patel D."/>
            <person name="Pearce A.V."/>
            <person name="Peck A.I."/>
            <person name="Pelan S."/>
            <person name="Phelps K."/>
            <person name="Phillimore B.J."/>
            <person name="Plumb R."/>
            <person name="Rajan J."/>
            <person name="Raymond C."/>
            <person name="Rouse G."/>
            <person name="Saenphimmachak C."/>
            <person name="Sehra H.K."/>
            <person name="Sheridan E."/>
            <person name="Shownkeen R."/>
            <person name="Sims S."/>
            <person name="Skuce C.D."/>
            <person name="Smith M."/>
            <person name="Steward C."/>
            <person name="Subramanian S."/>
            <person name="Sycamore N."/>
            <person name="Tracey A."/>
            <person name="Tromans A."/>
            <person name="Van Helmond Z."/>
            <person name="Wall M."/>
            <person name="Wallis J.M."/>
            <person name="White S."/>
            <person name="Whitehead S.L."/>
            <person name="Wilkinson J.E."/>
            <person name="Willey D.L."/>
            <person name="Williams H."/>
            <person name="Wilming L."/>
            <person name="Wray P.W."/>
            <person name="Wu Z."/>
            <person name="Coulson A."/>
            <person name="Vaudin M."/>
            <person name="Sulston J.E."/>
            <person name="Durbin R.M."/>
            <person name="Hubbard T."/>
            <person name="Wooster R."/>
            <person name="Dunham I."/>
            <person name="Carter N.P."/>
            <person name="McVean G."/>
            <person name="Ross M.T."/>
            <person name="Harrow J."/>
            <person name="Olson M.V."/>
            <person name="Beck S."/>
            <person name="Rogers J."/>
            <person name="Bentley D.R."/>
        </authorList>
    </citation>
    <scope>NUCLEOTIDE SEQUENCE [LARGE SCALE GENOMIC DNA]</scope>
</reference>
<reference key="3">
    <citation type="journal article" date="2004" name="Genome Res.">
        <title>The status, quality, and expansion of the NIH full-length cDNA project: the Mammalian Gene Collection (MGC).</title>
        <authorList>
            <consortium name="The MGC Project Team"/>
        </authorList>
    </citation>
    <scope>NUCLEOTIDE SEQUENCE [LARGE SCALE MRNA]</scope>
    <source>
        <tissue>Brain</tissue>
    </source>
</reference>
<reference key="4">
    <citation type="journal article" date="2009" name="Science">
        <title>Lysine acetylation targets protein complexes and co-regulates major cellular functions.</title>
        <authorList>
            <person name="Choudhary C."/>
            <person name="Kumar C."/>
            <person name="Gnad F."/>
            <person name="Nielsen M.L."/>
            <person name="Rehman M."/>
            <person name="Walther T.C."/>
            <person name="Olsen J.V."/>
            <person name="Mann M."/>
        </authorList>
    </citation>
    <scope>ACETYLATION [LARGE SCALE ANALYSIS] AT LYS-221 AND LYS-233</scope>
    <scope>IDENTIFICATION BY MASS SPECTROMETRY [LARGE SCALE ANALYSIS]</scope>
</reference>
<reference key="5">
    <citation type="journal article" date="2011" name="BMC Syst. Biol.">
        <title>Initial characterization of the human central proteome.</title>
        <authorList>
            <person name="Burkard T.R."/>
            <person name="Planyavsky M."/>
            <person name="Kaupe I."/>
            <person name="Breitwieser F.P."/>
            <person name="Buerckstuemmer T."/>
            <person name="Bennett K.L."/>
            <person name="Superti-Furga G."/>
            <person name="Colinge J."/>
        </authorList>
    </citation>
    <scope>IDENTIFICATION BY MASS SPECTROMETRY [LARGE SCALE ANALYSIS]</scope>
</reference>
<reference key="6">
    <citation type="journal article" date="2014" name="J. Proteomics">
        <title>An enzyme assisted RP-RPLC approach for in-depth analysis of human liver phosphoproteome.</title>
        <authorList>
            <person name="Bian Y."/>
            <person name="Song C."/>
            <person name="Cheng K."/>
            <person name="Dong M."/>
            <person name="Wang F."/>
            <person name="Huang J."/>
            <person name="Sun D."/>
            <person name="Wang L."/>
            <person name="Ye M."/>
            <person name="Zou H."/>
        </authorList>
    </citation>
    <scope>IDENTIFICATION BY MASS SPECTROMETRY [LARGE SCALE ANALYSIS]</scope>
    <source>
        <tissue>Liver</tissue>
    </source>
</reference>
<reference key="7">
    <citation type="journal article" date="2015" name="Proteomics">
        <title>N-terminome analysis of the human mitochondrial proteome.</title>
        <authorList>
            <person name="Vaca Jacome A.S."/>
            <person name="Rabilloud T."/>
            <person name="Schaeffer-Reiss C."/>
            <person name="Rompais M."/>
            <person name="Ayoub D."/>
            <person name="Lane L."/>
            <person name="Bairoch A."/>
            <person name="Van Dorsselaer A."/>
            <person name="Carapito C."/>
        </authorList>
    </citation>
    <scope>CLEAVAGE OF TRANSIT PEPTIDE [LARGE SCALE ANALYSIS] AFTER VAL-42</scope>
    <scope>IDENTIFICATION BY MASS SPECTROMETRY [LARGE SCALE ANALYSIS]</scope>
</reference>
<reference evidence="8 9 10 11 12 13 14 15 16" key="8">
    <citation type="journal article" date="2023" name="Mol. Cell">
        <title>Structure of the human ATP synthase.</title>
        <authorList>
            <person name="Lai Y."/>
            <person name="Zhang Y."/>
            <person name="Zhou S."/>
            <person name="Xu J."/>
            <person name="Du Z."/>
            <person name="Feng Z."/>
            <person name="Yu L."/>
            <person name="Zhao Z."/>
            <person name="Wang W."/>
            <person name="Tang Y."/>
            <person name="Yang X."/>
            <person name="Guddat L.W."/>
            <person name="Liu F."/>
            <person name="Gao Y."/>
            <person name="Rao Z."/>
            <person name="Gong H."/>
        </authorList>
    </citation>
    <scope>STRUCTURE BY ELECTRON MICROSCOPY (2.53 ANGSTROMS) OF 43-256</scope>
    <scope>IDENTIFICATION IN THE ATP SYNTHASE COMPLEX</scope>
    <scope>FUNCTION</scope>
    <scope>SUBUNIT</scope>
</reference>